<name>MIAA_NITV2</name>
<accession>Q72BV1</accession>
<reference key="1">
    <citation type="journal article" date="2004" name="Nat. Biotechnol.">
        <title>The genome sequence of the anaerobic, sulfate-reducing bacterium Desulfovibrio vulgaris Hildenborough.</title>
        <authorList>
            <person name="Heidelberg J.F."/>
            <person name="Seshadri R."/>
            <person name="Haveman S.A."/>
            <person name="Hemme C.L."/>
            <person name="Paulsen I.T."/>
            <person name="Kolonay J.F."/>
            <person name="Eisen J.A."/>
            <person name="Ward N.L."/>
            <person name="Methe B.A."/>
            <person name="Brinkac L.M."/>
            <person name="Daugherty S.C."/>
            <person name="DeBoy R.T."/>
            <person name="Dodson R.J."/>
            <person name="Durkin A.S."/>
            <person name="Madupu R."/>
            <person name="Nelson W.C."/>
            <person name="Sullivan S.A."/>
            <person name="Fouts D.E."/>
            <person name="Haft D.H."/>
            <person name="Selengut J."/>
            <person name="Peterson J.D."/>
            <person name="Davidsen T.M."/>
            <person name="Zafar N."/>
            <person name="Zhou L."/>
            <person name="Radune D."/>
            <person name="Dimitrov G."/>
            <person name="Hance M."/>
            <person name="Tran K."/>
            <person name="Khouri H.M."/>
            <person name="Gill J."/>
            <person name="Utterback T.R."/>
            <person name="Feldblyum T.V."/>
            <person name="Wall J.D."/>
            <person name="Voordouw G."/>
            <person name="Fraser C.M."/>
        </authorList>
    </citation>
    <scope>NUCLEOTIDE SEQUENCE [LARGE SCALE GENOMIC DNA]</scope>
    <source>
        <strain>ATCC 29579 / DSM 644 / CCUG 34227 / NCIMB 8303 / VKM B-1760 / Hildenborough</strain>
    </source>
</reference>
<comment type="function">
    <text evidence="1">Catalyzes the transfer of a dimethylallyl group onto the adenine at position 37 in tRNAs that read codons beginning with uridine, leading to the formation of N6-(dimethylallyl)adenosine (i(6)A).</text>
</comment>
<comment type="catalytic activity">
    <reaction evidence="1">
        <text>adenosine(37) in tRNA + dimethylallyl diphosphate = N(6)-dimethylallyladenosine(37) in tRNA + diphosphate</text>
        <dbReference type="Rhea" id="RHEA:26482"/>
        <dbReference type="Rhea" id="RHEA-COMP:10162"/>
        <dbReference type="Rhea" id="RHEA-COMP:10375"/>
        <dbReference type="ChEBI" id="CHEBI:33019"/>
        <dbReference type="ChEBI" id="CHEBI:57623"/>
        <dbReference type="ChEBI" id="CHEBI:74411"/>
        <dbReference type="ChEBI" id="CHEBI:74415"/>
        <dbReference type="EC" id="2.5.1.75"/>
    </reaction>
</comment>
<comment type="cofactor">
    <cofactor evidence="1">
        <name>Mg(2+)</name>
        <dbReference type="ChEBI" id="CHEBI:18420"/>
    </cofactor>
</comment>
<comment type="subunit">
    <text evidence="1">Monomer.</text>
</comment>
<comment type="similarity">
    <text evidence="1">Belongs to the IPP transferase family.</text>
</comment>
<gene>
    <name evidence="1" type="primary">miaA</name>
    <name type="ordered locus">DVU_1533</name>
</gene>
<dbReference type="EC" id="2.5.1.75" evidence="1"/>
<dbReference type="EMBL" id="AE017285">
    <property type="protein sequence ID" value="AAS96011.1"/>
    <property type="molecule type" value="Genomic_DNA"/>
</dbReference>
<dbReference type="RefSeq" id="WP_010938825.1">
    <property type="nucleotide sequence ID" value="NC_002937.3"/>
</dbReference>
<dbReference type="RefSeq" id="YP_010752.1">
    <property type="nucleotide sequence ID" value="NC_002937.3"/>
</dbReference>
<dbReference type="SMR" id="Q72BV1"/>
<dbReference type="STRING" id="882.DVU_1533"/>
<dbReference type="PaxDb" id="882-DVU_1533"/>
<dbReference type="EnsemblBacteria" id="AAS96011">
    <property type="protein sequence ID" value="AAS96011"/>
    <property type="gene ID" value="DVU_1533"/>
</dbReference>
<dbReference type="KEGG" id="dvu:DVU_1533"/>
<dbReference type="PATRIC" id="fig|882.5.peg.1411"/>
<dbReference type="eggNOG" id="COG0324">
    <property type="taxonomic scope" value="Bacteria"/>
</dbReference>
<dbReference type="HOGENOM" id="CLU_032616_0_1_7"/>
<dbReference type="OrthoDB" id="9776390at2"/>
<dbReference type="PhylomeDB" id="Q72BV1"/>
<dbReference type="Proteomes" id="UP000002194">
    <property type="component" value="Chromosome"/>
</dbReference>
<dbReference type="GO" id="GO:0005524">
    <property type="term" value="F:ATP binding"/>
    <property type="evidence" value="ECO:0007669"/>
    <property type="project" value="UniProtKB-UniRule"/>
</dbReference>
<dbReference type="GO" id="GO:0052381">
    <property type="term" value="F:tRNA dimethylallyltransferase activity"/>
    <property type="evidence" value="ECO:0007669"/>
    <property type="project" value="UniProtKB-UniRule"/>
</dbReference>
<dbReference type="GO" id="GO:0006400">
    <property type="term" value="P:tRNA modification"/>
    <property type="evidence" value="ECO:0007669"/>
    <property type="project" value="TreeGrafter"/>
</dbReference>
<dbReference type="Gene3D" id="1.10.20.140">
    <property type="match status" value="1"/>
</dbReference>
<dbReference type="Gene3D" id="3.40.50.300">
    <property type="entry name" value="P-loop containing nucleotide triphosphate hydrolases"/>
    <property type="match status" value="1"/>
</dbReference>
<dbReference type="HAMAP" id="MF_00185">
    <property type="entry name" value="IPP_trans"/>
    <property type="match status" value="1"/>
</dbReference>
<dbReference type="InterPro" id="IPR039657">
    <property type="entry name" value="Dimethylallyltransferase"/>
</dbReference>
<dbReference type="InterPro" id="IPR018022">
    <property type="entry name" value="IPT"/>
</dbReference>
<dbReference type="InterPro" id="IPR027417">
    <property type="entry name" value="P-loop_NTPase"/>
</dbReference>
<dbReference type="NCBIfam" id="TIGR00174">
    <property type="entry name" value="miaA"/>
    <property type="match status" value="1"/>
</dbReference>
<dbReference type="PANTHER" id="PTHR11088">
    <property type="entry name" value="TRNA DIMETHYLALLYLTRANSFERASE"/>
    <property type="match status" value="1"/>
</dbReference>
<dbReference type="PANTHER" id="PTHR11088:SF60">
    <property type="entry name" value="TRNA DIMETHYLALLYLTRANSFERASE"/>
    <property type="match status" value="1"/>
</dbReference>
<dbReference type="Pfam" id="PF01715">
    <property type="entry name" value="IPPT"/>
    <property type="match status" value="1"/>
</dbReference>
<dbReference type="SUPFAM" id="SSF52540">
    <property type="entry name" value="P-loop containing nucleoside triphosphate hydrolases"/>
    <property type="match status" value="1"/>
</dbReference>
<organism>
    <name type="scientific">Nitratidesulfovibrio vulgaris (strain ATCC 29579 / DSM 644 / CCUG 34227 / NCIMB 8303 / VKM B-1760 / Hildenborough)</name>
    <name type="common">Desulfovibrio vulgaris</name>
    <dbReference type="NCBI Taxonomy" id="882"/>
    <lineage>
        <taxon>Bacteria</taxon>
        <taxon>Pseudomonadati</taxon>
        <taxon>Thermodesulfobacteriota</taxon>
        <taxon>Desulfovibrionia</taxon>
        <taxon>Desulfovibrionales</taxon>
        <taxon>Desulfovibrionaceae</taxon>
        <taxon>Nitratidesulfovibrio</taxon>
    </lineage>
</organism>
<protein>
    <recommendedName>
        <fullName evidence="1">tRNA dimethylallyltransferase</fullName>
        <ecNumber evidence="1">2.5.1.75</ecNumber>
    </recommendedName>
    <alternativeName>
        <fullName evidence="1">Dimethylallyl diphosphate:tRNA dimethylallyltransferase</fullName>
        <shortName evidence="1">DMAPP:tRNA dimethylallyltransferase</shortName>
        <shortName evidence="1">DMATase</shortName>
    </alternativeName>
    <alternativeName>
        <fullName evidence="1">Isopentenyl-diphosphate:tRNA isopentenyltransferase</fullName>
        <shortName evidence="1">IPP transferase</shortName>
        <shortName evidence="1">IPPT</shortName>
        <shortName evidence="1">IPTase</shortName>
    </alternativeName>
</protein>
<proteinExistence type="inferred from homology"/>
<evidence type="ECO:0000255" key="1">
    <source>
        <dbReference type="HAMAP-Rule" id="MF_00185"/>
    </source>
</evidence>
<sequence length="309" mass="33941">MSNELPAVICLVGPTGAGKTAAALHLAERFAGTVINADSRQVYRDFPIITAQPTAEEQAQCPHRLYGFLETEARMSAGVWGDHATAAIDEALAQGRLPLLVGGTGMYVRALLDGIAAIPAIPRDIHVRWQERCAAEGPQRLHAMLCDIDAEYAARIHPNDRQRVTRALEVHEHTGRTFSEWHRSAMPAPRYRALRIGFAATLDALTPRLAHRIDLMLAAGALDEARRARVHCDDPSAPGWSGIGCAETYAHLVGSLDYEAMRHVWLHNTRAYAKRQLTWFRADTRLTWYAPDDVEGIALGVASFLRGGA</sequence>
<feature type="chain" id="PRO_0000163912" description="tRNA dimethylallyltransferase">
    <location>
        <begin position="1"/>
        <end position="309"/>
    </location>
</feature>
<feature type="region of interest" description="Interaction with substrate tRNA" evidence="1">
    <location>
        <begin position="38"/>
        <end position="41"/>
    </location>
</feature>
<feature type="region of interest" description="Interaction with substrate tRNA" evidence="1">
    <location>
        <begin position="162"/>
        <end position="166"/>
    </location>
</feature>
<feature type="binding site" evidence="1">
    <location>
        <begin position="13"/>
        <end position="20"/>
    </location>
    <ligand>
        <name>ATP</name>
        <dbReference type="ChEBI" id="CHEBI:30616"/>
    </ligand>
</feature>
<feature type="binding site" evidence="1">
    <location>
        <begin position="15"/>
        <end position="20"/>
    </location>
    <ligand>
        <name>substrate</name>
    </ligand>
</feature>
<feature type="site" description="Interaction with substrate tRNA" evidence="1">
    <location>
        <position position="104"/>
    </location>
</feature>
<feature type="site" description="Interaction with substrate tRNA" evidence="1">
    <location>
        <position position="128"/>
    </location>
</feature>
<keyword id="KW-0067">ATP-binding</keyword>
<keyword id="KW-0460">Magnesium</keyword>
<keyword id="KW-0547">Nucleotide-binding</keyword>
<keyword id="KW-1185">Reference proteome</keyword>
<keyword id="KW-0808">Transferase</keyword>
<keyword id="KW-0819">tRNA processing</keyword>